<protein>
    <recommendedName>
        <fullName evidence="1">Protein translocase subunit SecA</fullName>
        <ecNumber evidence="1">7.4.2.8</ecNumber>
    </recommendedName>
</protein>
<evidence type="ECO:0000255" key="1">
    <source>
        <dbReference type="HAMAP-Rule" id="MF_01382"/>
    </source>
</evidence>
<evidence type="ECO:0000256" key="2">
    <source>
        <dbReference type="SAM" id="MobiDB-lite"/>
    </source>
</evidence>
<evidence type="ECO:0000269" key="3">
    <source>
    </source>
</evidence>
<evidence type="ECO:0007744" key="4">
    <source>
        <dbReference type="PDB" id="1OZB"/>
    </source>
</evidence>
<evidence type="ECO:0007829" key="5">
    <source>
        <dbReference type="PDB" id="1OZB"/>
    </source>
</evidence>
<organism>
    <name type="scientific">Haemophilus influenzae (strain ATCC 51907 / DSM 11121 / KW20 / Rd)</name>
    <dbReference type="NCBI Taxonomy" id="71421"/>
    <lineage>
        <taxon>Bacteria</taxon>
        <taxon>Pseudomonadati</taxon>
        <taxon>Pseudomonadota</taxon>
        <taxon>Gammaproteobacteria</taxon>
        <taxon>Pasteurellales</taxon>
        <taxon>Pasteurellaceae</taxon>
        <taxon>Haemophilus</taxon>
    </lineage>
</organism>
<keyword id="KW-0002">3D-structure</keyword>
<keyword id="KW-0067">ATP-binding</keyword>
<keyword id="KW-0997">Cell inner membrane</keyword>
<keyword id="KW-1003">Cell membrane</keyword>
<keyword id="KW-0963">Cytoplasm</keyword>
<keyword id="KW-0472">Membrane</keyword>
<keyword id="KW-0479">Metal-binding</keyword>
<keyword id="KW-0547">Nucleotide-binding</keyword>
<keyword id="KW-0653">Protein transport</keyword>
<keyword id="KW-1185">Reference proteome</keyword>
<keyword id="KW-1278">Translocase</keyword>
<keyword id="KW-0811">Translocation</keyword>
<keyword id="KW-0813">Transport</keyword>
<keyword id="KW-0862">Zinc</keyword>
<comment type="function">
    <text evidence="1">Part of the Sec protein translocase complex. Interacts with the SecYEG preprotein conducting channel. Has a central role in coupling the hydrolysis of ATP to the transfer of proteins into and across the cell membrane, serving both as a receptor for the preprotein-SecB complex and as an ATP-driven molecular motor driving the stepwise translocation of polypeptide chains across the membrane.</text>
</comment>
<comment type="catalytic activity">
    <reaction evidence="1">
        <text>ATP + H2O + cellular proteinSide 1 = ADP + phosphate + cellular proteinSide 2.</text>
        <dbReference type="EC" id="7.4.2.8"/>
    </reaction>
</comment>
<comment type="cofactor">
    <cofactor evidence="1 3">
        <name>Zn(2+)</name>
        <dbReference type="ChEBI" id="CHEBI:29105"/>
    </cofactor>
    <text evidence="3">Binds 1 zinc ion per subunit.</text>
</comment>
<comment type="subunit">
    <text evidence="1 3">Monomer and homodimer (By similarity). Part of the essential Sec protein translocation apparatus which comprises SecA, SecYEG and auxiliary proteins SecDF-YajC and YidC (By similarity). Forms a complex with SecB (PubMed:14517549).</text>
</comment>
<comment type="subcellular location">
    <subcellularLocation>
        <location evidence="1">Cell inner membrane</location>
        <topology evidence="1">Peripheral membrane protein</topology>
        <orientation evidence="1">Cytoplasmic side</orientation>
    </subcellularLocation>
    <subcellularLocation>
        <location evidence="1">Cytoplasm</location>
    </subcellularLocation>
    <text evidence="1">Distribution is 50-50.</text>
</comment>
<comment type="similarity">
    <text evidence="1">Belongs to the SecA family.</text>
</comment>
<proteinExistence type="evidence at protein level"/>
<dbReference type="EC" id="7.4.2.8" evidence="1"/>
<dbReference type="EMBL" id="L42023">
    <property type="protein sequence ID" value="AAC22566.1"/>
    <property type="molecule type" value="Genomic_DNA"/>
</dbReference>
<dbReference type="PIR" id="H64101">
    <property type="entry name" value="H64101"/>
</dbReference>
<dbReference type="RefSeq" id="NP_439069.1">
    <property type="nucleotide sequence ID" value="NC_000907.1"/>
</dbReference>
<dbReference type="PDB" id="1OZB">
    <property type="method" value="X-ray"/>
    <property type="resolution" value="2.80 A"/>
    <property type="chains" value="I/J=875-901"/>
</dbReference>
<dbReference type="PDBsum" id="1OZB"/>
<dbReference type="SMR" id="P43803"/>
<dbReference type="IntAct" id="P43803">
    <property type="interactions" value="1"/>
</dbReference>
<dbReference type="STRING" id="71421.HI_0909"/>
<dbReference type="EnsemblBacteria" id="AAC22566">
    <property type="protein sequence ID" value="AAC22566"/>
    <property type="gene ID" value="HI_0909"/>
</dbReference>
<dbReference type="KEGG" id="hin:HI_0909"/>
<dbReference type="PATRIC" id="fig|71421.8.peg.950"/>
<dbReference type="eggNOG" id="COG0653">
    <property type="taxonomic scope" value="Bacteria"/>
</dbReference>
<dbReference type="HOGENOM" id="CLU_005314_3_0_6"/>
<dbReference type="OrthoDB" id="9805579at2"/>
<dbReference type="PhylomeDB" id="P43803"/>
<dbReference type="BioCyc" id="HINF71421:G1GJ1-948-MONOMER"/>
<dbReference type="EvolutionaryTrace" id="P43803"/>
<dbReference type="Proteomes" id="UP000000579">
    <property type="component" value="Chromosome"/>
</dbReference>
<dbReference type="GO" id="GO:0031522">
    <property type="term" value="C:cell envelope Sec protein transport complex"/>
    <property type="evidence" value="ECO:0000318"/>
    <property type="project" value="GO_Central"/>
</dbReference>
<dbReference type="GO" id="GO:0005737">
    <property type="term" value="C:cytoplasm"/>
    <property type="evidence" value="ECO:0007669"/>
    <property type="project" value="UniProtKB-SubCell"/>
</dbReference>
<dbReference type="GO" id="GO:0005886">
    <property type="term" value="C:plasma membrane"/>
    <property type="evidence" value="ECO:0000318"/>
    <property type="project" value="GO_Central"/>
</dbReference>
<dbReference type="GO" id="GO:0005524">
    <property type="term" value="F:ATP binding"/>
    <property type="evidence" value="ECO:0000318"/>
    <property type="project" value="GO_Central"/>
</dbReference>
<dbReference type="GO" id="GO:0046872">
    <property type="term" value="F:metal ion binding"/>
    <property type="evidence" value="ECO:0007669"/>
    <property type="project" value="UniProtKB-KW"/>
</dbReference>
<dbReference type="GO" id="GO:0008564">
    <property type="term" value="F:protein-exporting ATPase activity"/>
    <property type="evidence" value="ECO:0007669"/>
    <property type="project" value="UniProtKB-EC"/>
</dbReference>
<dbReference type="GO" id="GO:0065002">
    <property type="term" value="P:intracellular protein transmembrane transport"/>
    <property type="evidence" value="ECO:0007669"/>
    <property type="project" value="UniProtKB-UniRule"/>
</dbReference>
<dbReference type="GO" id="GO:0017038">
    <property type="term" value="P:protein import"/>
    <property type="evidence" value="ECO:0007669"/>
    <property type="project" value="InterPro"/>
</dbReference>
<dbReference type="GO" id="GO:0006605">
    <property type="term" value="P:protein targeting"/>
    <property type="evidence" value="ECO:0007669"/>
    <property type="project" value="UniProtKB-UniRule"/>
</dbReference>
<dbReference type="GO" id="GO:0043952">
    <property type="term" value="P:protein transport by the Sec complex"/>
    <property type="evidence" value="ECO:0000318"/>
    <property type="project" value="GO_Central"/>
</dbReference>
<dbReference type="CDD" id="cd17928">
    <property type="entry name" value="DEXDc_SecA"/>
    <property type="match status" value="1"/>
</dbReference>
<dbReference type="CDD" id="cd18803">
    <property type="entry name" value="SF2_C_secA"/>
    <property type="match status" value="1"/>
</dbReference>
<dbReference type="FunFam" id="1.10.3060.10:FF:000001">
    <property type="entry name" value="Preprotein translocase subunit SecA"/>
    <property type="match status" value="1"/>
</dbReference>
<dbReference type="FunFam" id="3.40.50.300:FF:000113">
    <property type="entry name" value="Preprotein translocase subunit SecA"/>
    <property type="match status" value="1"/>
</dbReference>
<dbReference type="FunFam" id="3.90.1440.10:FF:000001">
    <property type="entry name" value="Preprotein translocase subunit SecA"/>
    <property type="match status" value="1"/>
</dbReference>
<dbReference type="Gene3D" id="1.10.3060.10">
    <property type="entry name" value="Helical scaffold and wing domains of SecA"/>
    <property type="match status" value="1"/>
</dbReference>
<dbReference type="Gene3D" id="3.40.50.300">
    <property type="entry name" value="P-loop containing nucleotide triphosphate hydrolases"/>
    <property type="match status" value="2"/>
</dbReference>
<dbReference type="Gene3D" id="3.90.1440.10">
    <property type="entry name" value="SecA, preprotein cross-linking domain"/>
    <property type="match status" value="1"/>
</dbReference>
<dbReference type="HAMAP" id="MF_01382">
    <property type="entry name" value="SecA"/>
    <property type="match status" value="1"/>
</dbReference>
<dbReference type="InterPro" id="IPR014001">
    <property type="entry name" value="Helicase_ATP-bd"/>
</dbReference>
<dbReference type="InterPro" id="IPR001650">
    <property type="entry name" value="Helicase_C-like"/>
</dbReference>
<dbReference type="InterPro" id="IPR027417">
    <property type="entry name" value="P-loop_NTPase"/>
</dbReference>
<dbReference type="InterPro" id="IPR004027">
    <property type="entry name" value="SEC_C_motif"/>
</dbReference>
<dbReference type="InterPro" id="IPR000185">
    <property type="entry name" value="SecA"/>
</dbReference>
<dbReference type="InterPro" id="IPR020937">
    <property type="entry name" value="SecA_CS"/>
</dbReference>
<dbReference type="InterPro" id="IPR011115">
    <property type="entry name" value="SecA_DEAD"/>
</dbReference>
<dbReference type="InterPro" id="IPR014018">
    <property type="entry name" value="SecA_motor_DEAD"/>
</dbReference>
<dbReference type="InterPro" id="IPR011130">
    <property type="entry name" value="SecA_preprotein_X-link_dom"/>
</dbReference>
<dbReference type="InterPro" id="IPR044722">
    <property type="entry name" value="SecA_SF2_C"/>
</dbReference>
<dbReference type="InterPro" id="IPR011116">
    <property type="entry name" value="SecA_Wing/Scaffold"/>
</dbReference>
<dbReference type="InterPro" id="IPR036266">
    <property type="entry name" value="SecA_Wing/Scaffold_sf"/>
</dbReference>
<dbReference type="InterPro" id="IPR036670">
    <property type="entry name" value="SecA_X-link_sf"/>
</dbReference>
<dbReference type="NCBIfam" id="NF009538">
    <property type="entry name" value="PRK12904.1"/>
    <property type="match status" value="1"/>
</dbReference>
<dbReference type="NCBIfam" id="TIGR00963">
    <property type="entry name" value="secA"/>
    <property type="match status" value="1"/>
</dbReference>
<dbReference type="PANTHER" id="PTHR30612:SF0">
    <property type="entry name" value="CHLOROPLAST PROTEIN-TRANSPORTING ATPASE"/>
    <property type="match status" value="1"/>
</dbReference>
<dbReference type="PANTHER" id="PTHR30612">
    <property type="entry name" value="SECA INNER MEMBRANE COMPONENT OF SEC PROTEIN SECRETION SYSTEM"/>
    <property type="match status" value="1"/>
</dbReference>
<dbReference type="Pfam" id="PF21090">
    <property type="entry name" value="P-loop_SecA"/>
    <property type="match status" value="1"/>
</dbReference>
<dbReference type="Pfam" id="PF02810">
    <property type="entry name" value="SEC-C"/>
    <property type="match status" value="1"/>
</dbReference>
<dbReference type="Pfam" id="PF07517">
    <property type="entry name" value="SecA_DEAD"/>
    <property type="match status" value="1"/>
</dbReference>
<dbReference type="Pfam" id="PF01043">
    <property type="entry name" value="SecA_PP_bind"/>
    <property type="match status" value="1"/>
</dbReference>
<dbReference type="Pfam" id="PF07516">
    <property type="entry name" value="SecA_SW"/>
    <property type="match status" value="1"/>
</dbReference>
<dbReference type="PRINTS" id="PR00906">
    <property type="entry name" value="SECA"/>
</dbReference>
<dbReference type="SMART" id="SM00957">
    <property type="entry name" value="SecA_DEAD"/>
    <property type="match status" value="1"/>
</dbReference>
<dbReference type="SMART" id="SM00958">
    <property type="entry name" value="SecA_PP_bind"/>
    <property type="match status" value="1"/>
</dbReference>
<dbReference type="SUPFAM" id="SSF81886">
    <property type="entry name" value="Helical scaffold and wing domains of SecA"/>
    <property type="match status" value="1"/>
</dbReference>
<dbReference type="SUPFAM" id="SSF52540">
    <property type="entry name" value="P-loop containing nucleoside triphosphate hydrolases"/>
    <property type="match status" value="2"/>
</dbReference>
<dbReference type="SUPFAM" id="SSF81767">
    <property type="entry name" value="Pre-protein crosslinking domain of SecA"/>
    <property type="match status" value="1"/>
</dbReference>
<dbReference type="PROSITE" id="PS01312">
    <property type="entry name" value="SECA"/>
    <property type="match status" value="1"/>
</dbReference>
<dbReference type="PROSITE" id="PS51196">
    <property type="entry name" value="SECA_MOTOR_DEAD"/>
    <property type="match status" value="1"/>
</dbReference>
<sequence length="901" mass="102587">MSILTRIFGSRNERVLRKLKKQVVKINKMEPAFEALSDDELKAKTQEFRDRLSGGETLQQILPEAFATVREASKRVLGMRHFDVQLIGGMVLTNRCIAEMRTGEGKTLTATLPCYLIALEGKGVHVVTVNDYLARRDAETNRPLFEFLGMSVGVNIPGLSPEEKRAAYAADITYATNSELGFDYLRDNLAHSKEERFQRTLGYALVDEVDSILIDEARTPLIISGQAENSSELYIAVNKLIPSLIKQEKEDTEEYQGEGDFTLDLKSKQAHLTERGQEKVEDWLIAQGLMPEGDSLYSPSRIVLLHHVMAALRAHTLFEKDVDYIVKDGEIVIVDEHTGRTMAGRRWSDGLHQAIEAKEGVDVKSENQTVASISYQNYFRLYERLAGMTGTADTEAFEFQQIYGLETVVIPTNRPMIRDDRTDVMFENEQYKFNAIIEDIKDCVERQQPVLVGTISVEKSEELSKALDKAGIKHNVLNAKFHQQEAEIVAEAGFPSAVTIATNMAGRGTDIILGGNWKAQAAKLENPTQEQIEALKAEWEKNHEIVMKAGGLHIIGTERHESRRIDNQLRGRSGRQGDPGSSRFYLSLEDGLMRIYLNEGKLNLMRKAFTVAGEAMESKMLAKVIASAQAKVEAFHFDGRKNLLEYDDVANDQRHAIYEQRNHLLDNDDISETINAIRHDVFNGVIDQYIPPQSLEEQWDIKGLEERLSQEFGMELPISNWLEEDNNLHEESLRERIVEIAEKEYKEKEALVGEDAMRHFEKGVMLQTLDELWKEHLASMDYLRQGIHLRGYAQKDPKQEYKKESFRMFTEMLDSLKHQVITALTRVRVRTQEEMEEAERARQEMAARINQNNLPVDENSQTTQNSETEDYSDRRIGRNEPCPCGSGKKYKHCHGSRVARQ</sequence>
<gene>
    <name evidence="1" type="primary">secA</name>
    <name type="ordered locus">HI_0909</name>
</gene>
<feature type="chain" id="PRO_0000109586" description="Protein translocase subunit SecA">
    <location>
        <begin position="1"/>
        <end position="901"/>
    </location>
</feature>
<feature type="region of interest" description="Disordered" evidence="2">
    <location>
        <begin position="848"/>
        <end position="901"/>
    </location>
</feature>
<feature type="compositionally biased region" description="Polar residues" evidence="2">
    <location>
        <begin position="849"/>
        <end position="866"/>
    </location>
</feature>
<feature type="compositionally biased region" description="Basic residues" evidence="2">
    <location>
        <begin position="888"/>
        <end position="901"/>
    </location>
</feature>
<feature type="binding site" evidence="1">
    <location>
        <position position="85"/>
    </location>
    <ligand>
        <name>ATP</name>
        <dbReference type="ChEBI" id="CHEBI:30616"/>
    </ligand>
</feature>
<feature type="binding site" evidence="1">
    <location>
        <begin position="103"/>
        <end position="107"/>
    </location>
    <ligand>
        <name>ATP</name>
        <dbReference type="ChEBI" id="CHEBI:30616"/>
    </ligand>
</feature>
<feature type="binding site" evidence="1">
    <location>
        <position position="510"/>
    </location>
    <ligand>
        <name>ATP</name>
        <dbReference type="ChEBI" id="CHEBI:30616"/>
    </ligand>
</feature>
<feature type="binding site" evidence="1 3 4">
    <location>
        <position position="882"/>
    </location>
    <ligand>
        <name>Zn(2+)</name>
        <dbReference type="ChEBI" id="CHEBI:29105"/>
    </ligand>
</feature>
<feature type="binding site" evidence="1 3 4">
    <location>
        <position position="884"/>
    </location>
    <ligand>
        <name>Zn(2+)</name>
        <dbReference type="ChEBI" id="CHEBI:29105"/>
    </ligand>
</feature>
<feature type="binding site" evidence="1 3 4">
    <location>
        <position position="893"/>
    </location>
    <ligand>
        <name>Zn(2+)</name>
        <dbReference type="ChEBI" id="CHEBI:29105"/>
    </ligand>
</feature>
<feature type="binding site" evidence="1 3 4">
    <location>
        <position position="894"/>
    </location>
    <ligand>
        <name>Zn(2+)</name>
        <dbReference type="ChEBI" id="CHEBI:29105"/>
    </ligand>
</feature>
<feature type="mutagenesis site" description="Binds zinc, unable to bind secB." evidence="3">
    <original>R</original>
    <variation>A</variation>
    <location>
        <position position="878"/>
    </location>
</feature>
<feature type="mutagenesis site" description="Binds zinc, unable to bind secB." evidence="3">
    <original>N</original>
    <variation>A</variation>
    <location>
        <position position="879"/>
    </location>
</feature>
<feature type="mutagenesis site" description="Binds zinc, still binds secB." evidence="3">
    <original>K</original>
    <variation>A</variation>
    <location>
        <position position="888"/>
    </location>
</feature>
<feature type="mutagenesis site" description="Binds zinc, unable to bind secB." evidence="3">
    <original>K</original>
    <variation>A</variation>
    <location>
        <position position="889"/>
    </location>
</feature>
<feature type="mutagenesis site" description="Binds zinc, unable to bind secB." evidence="3">
    <original>K</original>
    <variation>A</variation>
    <location>
        <position position="891"/>
    </location>
</feature>
<feature type="strand" evidence="5">
    <location>
        <begin position="887"/>
        <end position="889"/>
    </location>
</feature>
<feature type="helix" evidence="5">
    <location>
        <begin position="890"/>
        <end position="892"/>
    </location>
</feature>
<feature type="turn" evidence="5">
    <location>
        <begin position="893"/>
        <end position="895"/>
    </location>
</feature>
<reference key="1">
    <citation type="journal article" date="1995" name="Science">
        <title>Whole-genome random sequencing and assembly of Haemophilus influenzae Rd.</title>
        <authorList>
            <person name="Fleischmann R.D."/>
            <person name="Adams M.D."/>
            <person name="White O."/>
            <person name="Clayton R.A."/>
            <person name="Kirkness E.F."/>
            <person name="Kerlavage A.R."/>
            <person name="Bult C.J."/>
            <person name="Tomb J.-F."/>
            <person name="Dougherty B.A."/>
            <person name="Merrick J.M."/>
            <person name="McKenney K."/>
            <person name="Sutton G.G."/>
            <person name="FitzHugh W."/>
            <person name="Fields C.A."/>
            <person name="Gocayne J.D."/>
            <person name="Scott J.D."/>
            <person name="Shirley R."/>
            <person name="Liu L.-I."/>
            <person name="Glodek A."/>
            <person name="Kelley J.M."/>
            <person name="Weidman J.F."/>
            <person name="Phillips C.A."/>
            <person name="Spriggs T."/>
            <person name="Hedblom E."/>
            <person name="Cotton M.D."/>
            <person name="Utterback T.R."/>
            <person name="Hanna M.C."/>
            <person name="Nguyen D.T."/>
            <person name="Saudek D.M."/>
            <person name="Brandon R.C."/>
            <person name="Fine L.D."/>
            <person name="Fritchman J.L."/>
            <person name="Fuhrmann J.L."/>
            <person name="Geoghagen N.S.M."/>
            <person name="Gnehm C.L."/>
            <person name="McDonald L.A."/>
            <person name="Small K.V."/>
            <person name="Fraser C.M."/>
            <person name="Smith H.O."/>
            <person name="Venter J.C."/>
        </authorList>
    </citation>
    <scope>NUCLEOTIDE SEQUENCE [LARGE SCALE GENOMIC DNA]</scope>
    <source>
        <strain>ATCC 51907 / DSM 11121 / KW20 / Rd</strain>
    </source>
</reference>
<reference evidence="4" key="2">
    <citation type="journal article" date="2003" name="Nat. Struct. Biol.">
        <title>Structural determinants of SecB recognition by SecA in bacterial protein translocation.</title>
        <authorList>
            <person name="Zhou J."/>
            <person name="Xu Z."/>
        </authorList>
    </citation>
    <scope>X-RAY CRYSTALLOGRAPHY (2.8 ANGSTROMS) OF 875-901 IN COMPLEX WITH SECB AND ZINC</scope>
    <scope>MUTAGENESIS OF ARG-878; ASN-879; LYS-888; LYS-889 AND LYS-891</scope>
    <scope>COFACTOR</scope>
    <source>
        <strain>ATCC 51907 / DSM 11121 / KW20 / Rd</strain>
    </source>
</reference>
<name>SECA_HAEIN</name>
<accession>P43803</accession>